<organism>
    <name type="scientific">Bacillus cereus (strain G9842)</name>
    <dbReference type="NCBI Taxonomy" id="405531"/>
    <lineage>
        <taxon>Bacteria</taxon>
        <taxon>Bacillati</taxon>
        <taxon>Bacillota</taxon>
        <taxon>Bacilli</taxon>
        <taxon>Bacillales</taxon>
        <taxon>Bacillaceae</taxon>
        <taxon>Bacillus</taxon>
        <taxon>Bacillus cereus group</taxon>
    </lineage>
</organism>
<keyword id="KW-0456">Lyase</keyword>
<keyword id="KW-0663">Pyridoxal phosphate</keyword>
<sequence length="443" mass="49143">MKEIGALQAEYPLVNKLIATKEVFWINPHIEKYERAIKDSPLNEENVKDAEERLKRFAPYIAKVFPETKGTNGIIESPLVKIPSMKEALETNYKQTILGELLLKCDSHLPISGSIKARGGIYEVLKHAEQLALQHGMLTEEDDYSILDSDTCREFFSKYSIAVGSTGNLGLSIGIMSANLGFNVTVHMSADAKEWKKSLLRSKGVNVIEYEDDYSKAVEEGRRQADADPSCYFVDDENSHDLFLGYSVAASRLQKQLEELEVVVDEDHPLFVYLPCGVGGGPGGVAFGLKLLYKDNVHCFFAEPTHSPCMLLGLMTGLHDKIAVQDIGIDNVTDADGLAVGRPSGFVGKTMEPFLSGNYTVNDEELYRLLKELADTENIYLEPSALAGMIGPVKVCKEDEYLQKQQLTEKVKKGTHIVWGTGGSMVPKDVMNEYYRKGLELTI</sequence>
<name>SDHD_BACC2</name>
<comment type="catalytic activity">
    <reaction evidence="1">
        <text>D-serine = pyruvate + NH4(+)</text>
        <dbReference type="Rhea" id="RHEA:13977"/>
        <dbReference type="ChEBI" id="CHEBI:15361"/>
        <dbReference type="ChEBI" id="CHEBI:28938"/>
        <dbReference type="ChEBI" id="CHEBI:35247"/>
        <dbReference type="EC" id="4.3.1.18"/>
    </reaction>
</comment>
<comment type="cofactor">
    <cofactor evidence="1">
        <name>pyridoxal 5'-phosphate</name>
        <dbReference type="ChEBI" id="CHEBI:597326"/>
    </cofactor>
</comment>
<comment type="similarity">
    <text evidence="1">Belongs to the serine/threonine dehydratase family. DsdA subfamily.</text>
</comment>
<reference key="1">
    <citation type="submission" date="2008-10" db="EMBL/GenBank/DDBJ databases">
        <title>Genome sequence of Bacillus cereus G9842.</title>
        <authorList>
            <person name="Dodson R.J."/>
            <person name="Durkin A.S."/>
            <person name="Rosovitz M.J."/>
            <person name="Rasko D.A."/>
            <person name="Hoffmaster A."/>
            <person name="Ravel J."/>
            <person name="Sutton G."/>
        </authorList>
    </citation>
    <scope>NUCLEOTIDE SEQUENCE [LARGE SCALE GENOMIC DNA]</scope>
    <source>
        <strain>G9842</strain>
    </source>
</reference>
<proteinExistence type="inferred from homology"/>
<feature type="chain" id="PRO_1000135755" description="Probable D-serine dehydratase">
    <location>
        <begin position="1"/>
        <end position="443"/>
    </location>
</feature>
<feature type="modified residue" description="N6-(pyridoxal phosphate)lysine" evidence="1">
    <location>
        <position position="116"/>
    </location>
</feature>
<protein>
    <recommendedName>
        <fullName evidence="1">Probable D-serine dehydratase</fullName>
        <ecNumber evidence="1">4.3.1.18</ecNumber>
    </recommendedName>
    <alternativeName>
        <fullName evidence="1">D-serine deaminase</fullName>
        <shortName evidence="1">DSD</shortName>
    </alternativeName>
</protein>
<evidence type="ECO:0000255" key="1">
    <source>
        <dbReference type="HAMAP-Rule" id="MF_01030"/>
    </source>
</evidence>
<accession>B7IR88</accession>
<gene>
    <name evidence="1" type="primary">dsdA</name>
    <name type="ordered locus">BCG9842_B3545</name>
</gene>
<dbReference type="EC" id="4.3.1.18" evidence="1"/>
<dbReference type="EMBL" id="CP001186">
    <property type="protein sequence ID" value="ACK93239.1"/>
    <property type="molecule type" value="Genomic_DNA"/>
</dbReference>
<dbReference type="RefSeq" id="WP_000658548.1">
    <property type="nucleotide sequence ID" value="NC_011772.1"/>
</dbReference>
<dbReference type="SMR" id="B7IR88"/>
<dbReference type="KEGG" id="bcg:BCG9842_B3545"/>
<dbReference type="HOGENOM" id="CLU_035707_0_0_9"/>
<dbReference type="Proteomes" id="UP000006744">
    <property type="component" value="Chromosome"/>
</dbReference>
<dbReference type="GO" id="GO:0008721">
    <property type="term" value="F:D-serine ammonia-lyase activity"/>
    <property type="evidence" value="ECO:0007669"/>
    <property type="project" value="UniProtKB-EC"/>
</dbReference>
<dbReference type="GO" id="GO:0016836">
    <property type="term" value="F:hydro-lyase activity"/>
    <property type="evidence" value="ECO:0007669"/>
    <property type="project" value="UniProtKB-UniRule"/>
</dbReference>
<dbReference type="GO" id="GO:0030170">
    <property type="term" value="F:pyridoxal phosphate binding"/>
    <property type="evidence" value="ECO:0007669"/>
    <property type="project" value="InterPro"/>
</dbReference>
<dbReference type="GO" id="GO:0036088">
    <property type="term" value="P:D-serine catabolic process"/>
    <property type="evidence" value="ECO:0007669"/>
    <property type="project" value="TreeGrafter"/>
</dbReference>
<dbReference type="GO" id="GO:0009097">
    <property type="term" value="P:isoleucine biosynthetic process"/>
    <property type="evidence" value="ECO:0007669"/>
    <property type="project" value="TreeGrafter"/>
</dbReference>
<dbReference type="CDD" id="cd06447">
    <property type="entry name" value="D-Ser-dehyd"/>
    <property type="match status" value="1"/>
</dbReference>
<dbReference type="FunFam" id="3.40.50.1100:FF:000018">
    <property type="entry name" value="D-serine dehydratase"/>
    <property type="match status" value="1"/>
</dbReference>
<dbReference type="Gene3D" id="3.40.50.1100">
    <property type="match status" value="2"/>
</dbReference>
<dbReference type="HAMAP" id="MF_01030">
    <property type="entry name" value="D_Ser_dehydrat"/>
    <property type="match status" value="1"/>
</dbReference>
<dbReference type="InterPro" id="IPR011780">
    <property type="entry name" value="D_Ser_am_lyase"/>
</dbReference>
<dbReference type="InterPro" id="IPR050147">
    <property type="entry name" value="Ser/Thr_Dehydratase"/>
</dbReference>
<dbReference type="InterPro" id="IPR000634">
    <property type="entry name" value="Ser/Thr_deHydtase_PyrdxlP-BS"/>
</dbReference>
<dbReference type="InterPro" id="IPR001926">
    <property type="entry name" value="TrpB-like_PALP"/>
</dbReference>
<dbReference type="InterPro" id="IPR036052">
    <property type="entry name" value="TrpB-like_PALP_sf"/>
</dbReference>
<dbReference type="NCBIfam" id="TIGR02035">
    <property type="entry name" value="D_Ser_am_lyase"/>
    <property type="match status" value="1"/>
</dbReference>
<dbReference type="NCBIfam" id="NF002823">
    <property type="entry name" value="PRK02991.1"/>
    <property type="match status" value="1"/>
</dbReference>
<dbReference type="PANTHER" id="PTHR48078:SF9">
    <property type="entry name" value="D-SERINE DEHYDRATASE"/>
    <property type="match status" value="1"/>
</dbReference>
<dbReference type="PANTHER" id="PTHR48078">
    <property type="entry name" value="THREONINE DEHYDRATASE, MITOCHONDRIAL-RELATED"/>
    <property type="match status" value="1"/>
</dbReference>
<dbReference type="Pfam" id="PF00291">
    <property type="entry name" value="PALP"/>
    <property type="match status" value="1"/>
</dbReference>
<dbReference type="SUPFAM" id="SSF53686">
    <property type="entry name" value="Tryptophan synthase beta subunit-like PLP-dependent enzymes"/>
    <property type="match status" value="1"/>
</dbReference>
<dbReference type="PROSITE" id="PS00165">
    <property type="entry name" value="DEHYDRATASE_SER_THR"/>
    <property type="match status" value="1"/>
</dbReference>